<comment type="function">
    <text evidence="1">Catalyzes the phosphorylation of D-fructose 6-phosphate to fructose 1,6-bisphosphate by ATP, the first committing step of glycolysis.</text>
</comment>
<comment type="catalytic activity">
    <reaction evidence="1">
        <text>beta-D-fructose 6-phosphate + ATP = beta-D-fructose 1,6-bisphosphate + ADP + H(+)</text>
        <dbReference type="Rhea" id="RHEA:16109"/>
        <dbReference type="ChEBI" id="CHEBI:15378"/>
        <dbReference type="ChEBI" id="CHEBI:30616"/>
        <dbReference type="ChEBI" id="CHEBI:32966"/>
        <dbReference type="ChEBI" id="CHEBI:57634"/>
        <dbReference type="ChEBI" id="CHEBI:456216"/>
        <dbReference type="EC" id="2.7.1.11"/>
    </reaction>
</comment>
<comment type="cofactor">
    <cofactor evidence="1">
        <name>Mg(2+)</name>
        <dbReference type="ChEBI" id="CHEBI:18420"/>
    </cofactor>
</comment>
<comment type="activity regulation">
    <text evidence="1">Allosterically activated by ADP and other diphosphonucleosides, and allosterically inhibited by phosphoenolpyruvate.</text>
</comment>
<comment type="pathway">
    <text evidence="1">Carbohydrate degradation; glycolysis; D-glyceraldehyde 3-phosphate and glycerone phosphate from D-glucose: step 3/4.</text>
</comment>
<comment type="subunit">
    <text evidence="1">Homotetramer.</text>
</comment>
<comment type="subcellular location">
    <subcellularLocation>
        <location evidence="1">Cytoplasm</location>
    </subcellularLocation>
</comment>
<comment type="similarity">
    <text evidence="1">Belongs to the phosphofructokinase type A (PFKA) family. ATP-dependent PFK group I subfamily. Prokaryotic clade 'B1' sub-subfamily.</text>
</comment>
<feature type="chain" id="PRO_1000192372" description="ATP-dependent 6-phosphofructokinase isozyme 1">
    <location>
        <begin position="1"/>
        <end position="320"/>
    </location>
</feature>
<feature type="active site" description="Proton acceptor" evidence="1">
    <location>
        <position position="128"/>
    </location>
</feature>
<feature type="binding site" evidence="1">
    <location>
        <position position="12"/>
    </location>
    <ligand>
        <name>ATP</name>
        <dbReference type="ChEBI" id="CHEBI:30616"/>
    </ligand>
</feature>
<feature type="binding site" evidence="1">
    <location>
        <begin position="22"/>
        <end position="26"/>
    </location>
    <ligand>
        <name>ADP</name>
        <dbReference type="ChEBI" id="CHEBI:456216"/>
        <note>allosteric activator; ligand shared between dimeric partners</note>
    </ligand>
</feature>
<feature type="binding site" evidence="1">
    <location>
        <begin position="55"/>
        <end position="60"/>
    </location>
    <ligand>
        <name>ADP</name>
        <dbReference type="ChEBI" id="CHEBI:456216"/>
        <note>allosteric activator; ligand shared between dimeric partners</note>
    </ligand>
</feature>
<feature type="binding site" evidence="1">
    <location>
        <begin position="73"/>
        <end position="74"/>
    </location>
    <ligand>
        <name>ATP</name>
        <dbReference type="ChEBI" id="CHEBI:30616"/>
    </ligand>
</feature>
<feature type="binding site" evidence="1">
    <location>
        <begin position="103"/>
        <end position="106"/>
    </location>
    <ligand>
        <name>ATP</name>
        <dbReference type="ChEBI" id="CHEBI:30616"/>
    </ligand>
</feature>
<feature type="binding site" evidence="1">
    <location>
        <position position="104"/>
    </location>
    <ligand>
        <name>Mg(2+)</name>
        <dbReference type="ChEBI" id="CHEBI:18420"/>
        <note>catalytic</note>
    </ligand>
</feature>
<feature type="binding site" description="in other chain" evidence="1">
    <location>
        <begin position="126"/>
        <end position="128"/>
    </location>
    <ligand>
        <name>substrate</name>
        <note>ligand shared between dimeric partners</note>
    </ligand>
</feature>
<feature type="binding site" description="in other chain" evidence="1">
    <location>
        <position position="155"/>
    </location>
    <ligand>
        <name>ADP</name>
        <dbReference type="ChEBI" id="CHEBI:456216"/>
        <note>allosteric activator; ligand shared between dimeric partners</note>
    </ligand>
</feature>
<feature type="binding site" evidence="1">
    <location>
        <position position="163"/>
    </location>
    <ligand>
        <name>substrate</name>
        <note>ligand shared between dimeric partners</note>
    </ligand>
</feature>
<feature type="binding site" description="in other chain" evidence="1">
    <location>
        <begin position="170"/>
        <end position="172"/>
    </location>
    <ligand>
        <name>substrate</name>
        <note>ligand shared between dimeric partners</note>
    </ligand>
</feature>
<feature type="binding site" description="in other chain" evidence="1">
    <location>
        <begin position="186"/>
        <end position="188"/>
    </location>
    <ligand>
        <name>ADP</name>
        <dbReference type="ChEBI" id="CHEBI:456216"/>
        <note>allosteric activator; ligand shared between dimeric partners</note>
    </ligand>
</feature>
<feature type="binding site" description="in other chain" evidence="1">
    <location>
        <position position="212"/>
    </location>
    <ligand>
        <name>ADP</name>
        <dbReference type="ChEBI" id="CHEBI:456216"/>
        <note>allosteric activator; ligand shared between dimeric partners</note>
    </ligand>
</feature>
<feature type="binding site" description="in other chain" evidence="1">
    <location>
        <begin position="214"/>
        <end position="216"/>
    </location>
    <ligand>
        <name>ADP</name>
        <dbReference type="ChEBI" id="CHEBI:456216"/>
        <note>allosteric activator; ligand shared between dimeric partners</note>
    </ligand>
</feature>
<feature type="binding site" description="in other chain" evidence="1">
    <location>
        <position position="223"/>
    </location>
    <ligand>
        <name>substrate</name>
        <note>ligand shared between dimeric partners</note>
    </ligand>
</feature>
<feature type="binding site" evidence="1">
    <location>
        <position position="244"/>
    </location>
    <ligand>
        <name>substrate</name>
        <note>ligand shared between dimeric partners</note>
    </ligand>
</feature>
<feature type="binding site" description="in other chain" evidence="1">
    <location>
        <begin position="250"/>
        <end position="253"/>
    </location>
    <ligand>
        <name>substrate</name>
        <note>ligand shared between dimeric partners</note>
    </ligand>
</feature>
<name>PFKA_ECO81</name>
<proteinExistence type="inferred from homology"/>
<sequence>MIKKIGVLTSGGDAPGMNAAIRGVVRSALTEGLEVMGIYDGYLGLYEDRMVQLDRYSVSDMINRGGTFLGSARFPEFRDENIRAVAIENLKKRGIDALVVIGGDGSYMGAMRLTEMGFPCIGLPGTIDNDIKGTDYTIGFFTALSTVVEAIDRLRDTSSSHQRISVVEVMGRYCGDLTLAAAIAGGCEFVVVPEVEFSREDLVNEIKAGIAKGKKHAIVAITEHMCDVDELAHFIEKETGRETRATVLGHIQRGGSPVPYDRILASRMGAYAIDLLLAGYGGRCVGIQNEQLVHHDIIDAIENMKRPFKGDWLDCAKKLY</sequence>
<accession>B7N2Q7</accession>
<organism>
    <name type="scientific">Escherichia coli O81 (strain ED1a)</name>
    <dbReference type="NCBI Taxonomy" id="585397"/>
    <lineage>
        <taxon>Bacteria</taxon>
        <taxon>Pseudomonadati</taxon>
        <taxon>Pseudomonadota</taxon>
        <taxon>Gammaproteobacteria</taxon>
        <taxon>Enterobacterales</taxon>
        <taxon>Enterobacteriaceae</taxon>
        <taxon>Escherichia</taxon>
    </lineage>
</organism>
<keyword id="KW-0021">Allosteric enzyme</keyword>
<keyword id="KW-0067">ATP-binding</keyword>
<keyword id="KW-0963">Cytoplasm</keyword>
<keyword id="KW-0324">Glycolysis</keyword>
<keyword id="KW-0418">Kinase</keyword>
<keyword id="KW-0460">Magnesium</keyword>
<keyword id="KW-0479">Metal-binding</keyword>
<keyword id="KW-0547">Nucleotide-binding</keyword>
<keyword id="KW-0808">Transferase</keyword>
<dbReference type="EC" id="2.7.1.11" evidence="1"/>
<dbReference type="EMBL" id="CU928162">
    <property type="protein sequence ID" value="CAR10726.2"/>
    <property type="molecule type" value="Genomic_DNA"/>
</dbReference>
<dbReference type="RefSeq" id="WP_000591795.1">
    <property type="nucleotide sequence ID" value="NC_011745.1"/>
</dbReference>
<dbReference type="SMR" id="B7N2Q7"/>
<dbReference type="GeneID" id="93777982"/>
<dbReference type="KEGG" id="ecq:ECED1_4618"/>
<dbReference type="HOGENOM" id="CLU_020655_0_1_6"/>
<dbReference type="UniPathway" id="UPA00109">
    <property type="reaction ID" value="UER00182"/>
</dbReference>
<dbReference type="Proteomes" id="UP000000748">
    <property type="component" value="Chromosome"/>
</dbReference>
<dbReference type="GO" id="GO:0005945">
    <property type="term" value="C:6-phosphofructokinase complex"/>
    <property type="evidence" value="ECO:0007669"/>
    <property type="project" value="TreeGrafter"/>
</dbReference>
<dbReference type="GO" id="GO:0003872">
    <property type="term" value="F:6-phosphofructokinase activity"/>
    <property type="evidence" value="ECO:0007669"/>
    <property type="project" value="UniProtKB-UniRule"/>
</dbReference>
<dbReference type="GO" id="GO:0016208">
    <property type="term" value="F:AMP binding"/>
    <property type="evidence" value="ECO:0007669"/>
    <property type="project" value="TreeGrafter"/>
</dbReference>
<dbReference type="GO" id="GO:0005524">
    <property type="term" value="F:ATP binding"/>
    <property type="evidence" value="ECO:0007669"/>
    <property type="project" value="UniProtKB-KW"/>
</dbReference>
<dbReference type="GO" id="GO:0070095">
    <property type="term" value="F:fructose-6-phosphate binding"/>
    <property type="evidence" value="ECO:0007669"/>
    <property type="project" value="TreeGrafter"/>
</dbReference>
<dbReference type="GO" id="GO:0042802">
    <property type="term" value="F:identical protein binding"/>
    <property type="evidence" value="ECO:0007669"/>
    <property type="project" value="TreeGrafter"/>
</dbReference>
<dbReference type="GO" id="GO:0046872">
    <property type="term" value="F:metal ion binding"/>
    <property type="evidence" value="ECO:0007669"/>
    <property type="project" value="UniProtKB-KW"/>
</dbReference>
<dbReference type="GO" id="GO:0048029">
    <property type="term" value="F:monosaccharide binding"/>
    <property type="evidence" value="ECO:0007669"/>
    <property type="project" value="TreeGrafter"/>
</dbReference>
<dbReference type="GO" id="GO:0061621">
    <property type="term" value="P:canonical glycolysis"/>
    <property type="evidence" value="ECO:0007669"/>
    <property type="project" value="TreeGrafter"/>
</dbReference>
<dbReference type="GO" id="GO:0030388">
    <property type="term" value="P:fructose 1,6-bisphosphate metabolic process"/>
    <property type="evidence" value="ECO:0007669"/>
    <property type="project" value="TreeGrafter"/>
</dbReference>
<dbReference type="GO" id="GO:0006002">
    <property type="term" value="P:fructose 6-phosphate metabolic process"/>
    <property type="evidence" value="ECO:0007669"/>
    <property type="project" value="InterPro"/>
</dbReference>
<dbReference type="CDD" id="cd00763">
    <property type="entry name" value="Bacterial_PFK"/>
    <property type="match status" value="1"/>
</dbReference>
<dbReference type="FunFam" id="3.40.50.450:FF:000001">
    <property type="entry name" value="ATP-dependent 6-phosphofructokinase"/>
    <property type="match status" value="1"/>
</dbReference>
<dbReference type="FunFam" id="3.40.50.460:FF:000002">
    <property type="entry name" value="ATP-dependent 6-phosphofructokinase"/>
    <property type="match status" value="1"/>
</dbReference>
<dbReference type="Gene3D" id="3.40.50.450">
    <property type="match status" value="1"/>
</dbReference>
<dbReference type="Gene3D" id="3.40.50.460">
    <property type="entry name" value="Phosphofructokinase domain"/>
    <property type="match status" value="1"/>
</dbReference>
<dbReference type="HAMAP" id="MF_00339">
    <property type="entry name" value="Phosphofructokinase_I_B1"/>
    <property type="match status" value="1"/>
</dbReference>
<dbReference type="InterPro" id="IPR022953">
    <property type="entry name" value="ATP_PFK"/>
</dbReference>
<dbReference type="InterPro" id="IPR012003">
    <property type="entry name" value="ATP_PFK_prok-type"/>
</dbReference>
<dbReference type="InterPro" id="IPR012828">
    <property type="entry name" value="PFKA_ATP_prok"/>
</dbReference>
<dbReference type="InterPro" id="IPR015912">
    <property type="entry name" value="Phosphofructokinase_CS"/>
</dbReference>
<dbReference type="InterPro" id="IPR000023">
    <property type="entry name" value="Phosphofructokinase_dom"/>
</dbReference>
<dbReference type="InterPro" id="IPR035966">
    <property type="entry name" value="PKF_sf"/>
</dbReference>
<dbReference type="NCBIfam" id="TIGR02482">
    <property type="entry name" value="PFKA_ATP"/>
    <property type="match status" value="1"/>
</dbReference>
<dbReference type="NCBIfam" id="NF002872">
    <property type="entry name" value="PRK03202.1"/>
    <property type="match status" value="1"/>
</dbReference>
<dbReference type="PANTHER" id="PTHR13697:SF4">
    <property type="entry name" value="ATP-DEPENDENT 6-PHOSPHOFRUCTOKINASE"/>
    <property type="match status" value="1"/>
</dbReference>
<dbReference type="PANTHER" id="PTHR13697">
    <property type="entry name" value="PHOSPHOFRUCTOKINASE"/>
    <property type="match status" value="1"/>
</dbReference>
<dbReference type="Pfam" id="PF00365">
    <property type="entry name" value="PFK"/>
    <property type="match status" value="1"/>
</dbReference>
<dbReference type="PIRSF" id="PIRSF000532">
    <property type="entry name" value="ATP_PFK_prok"/>
    <property type="match status" value="1"/>
</dbReference>
<dbReference type="PRINTS" id="PR00476">
    <property type="entry name" value="PHFRCTKINASE"/>
</dbReference>
<dbReference type="SUPFAM" id="SSF53784">
    <property type="entry name" value="Phosphofructokinase"/>
    <property type="match status" value="1"/>
</dbReference>
<dbReference type="PROSITE" id="PS00433">
    <property type="entry name" value="PHOSPHOFRUCTOKINASE"/>
    <property type="match status" value="1"/>
</dbReference>
<evidence type="ECO:0000255" key="1">
    <source>
        <dbReference type="HAMAP-Rule" id="MF_00339"/>
    </source>
</evidence>
<gene>
    <name evidence="1" type="primary">pfkA</name>
    <name type="ordered locus">ECED1_4618</name>
</gene>
<protein>
    <recommendedName>
        <fullName evidence="1">ATP-dependent 6-phosphofructokinase isozyme 1</fullName>
        <shortName evidence="1">ATP-PFK 1</shortName>
        <shortName evidence="1">Phosphofructokinase 1</shortName>
        <ecNumber evidence="1">2.7.1.11</ecNumber>
    </recommendedName>
    <alternativeName>
        <fullName>6-phosphofructokinase isozyme I</fullName>
    </alternativeName>
    <alternativeName>
        <fullName evidence="1">Phosphohexokinase 1</fullName>
    </alternativeName>
</protein>
<reference key="1">
    <citation type="journal article" date="2009" name="PLoS Genet.">
        <title>Organised genome dynamics in the Escherichia coli species results in highly diverse adaptive paths.</title>
        <authorList>
            <person name="Touchon M."/>
            <person name="Hoede C."/>
            <person name="Tenaillon O."/>
            <person name="Barbe V."/>
            <person name="Baeriswyl S."/>
            <person name="Bidet P."/>
            <person name="Bingen E."/>
            <person name="Bonacorsi S."/>
            <person name="Bouchier C."/>
            <person name="Bouvet O."/>
            <person name="Calteau A."/>
            <person name="Chiapello H."/>
            <person name="Clermont O."/>
            <person name="Cruveiller S."/>
            <person name="Danchin A."/>
            <person name="Diard M."/>
            <person name="Dossat C."/>
            <person name="Karoui M.E."/>
            <person name="Frapy E."/>
            <person name="Garry L."/>
            <person name="Ghigo J.M."/>
            <person name="Gilles A.M."/>
            <person name="Johnson J."/>
            <person name="Le Bouguenec C."/>
            <person name="Lescat M."/>
            <person name="Mangenot S."/>
            <person name="Martinez-Jehanne V."/>
            <person name="Matic I."/>
            <person name="Nassif X."/>
            <person name="Oztas S."/>
            <person name="Petit M.A."/>
            <person name="Pichon C."/>
            <person name="Rouy Z."/>
            <person name="Ruf C.S."/>
            <person name="Schneider D."/>
            <person name="Tourret J."/>
            <person name="Vacherie B."/>
            <person name="Vallenet D."/>
            <person name="Medigue C."/>
            <person name="Rocha E.P.C."/>
            <person name="Denamur E."/>
        </authorList>
    </citation>
    <scope>NUCLEOTIDE SEQUENCE [LARGE SCALE GENOMIC DNA]</scope>
    <source>
        <strain>ED1a</strain>
    </source>
</reference>